<proteinExistence type="inferred from homology"/>
<name>UBA4_EREGS</name>
<feature type="chain" id="PRO_0000369216" description="Adenylyltransferase and sulfurtransferase UBA4">
    <location>
        <begin position="1"/>
        <end position="443"/>
    </location>
</feature>
<feature type="domain" description="Rhodanese" evidence="2">
    <location>
        <begin position="342"/>
        <end position="441"/>
    </location>
</feature>
<feature type="active site" description="Glycyl thioester intermediate; for adenylyltransferase activity" evidence="2">
    <location>
        <position position="229"/>
    </location>
</feature>
<feature type="active site" description="Cysteine persulfide intermediate; for sulfurtransferase activity" evidence="2">
    <location>
        <position position="400"/>
    </location>
</feature>
<feature type="binding site" evidence="2">
    <location>
        <position position="81"/>
    </location>
    <ligand>
        <name>ATP</name>
        <dbReference type="ChEBI" id="CHEBI:30616"/>
    </ligand>
</feature>
<feature type="binding site" evidence="2">
    <location>
        <position position="102"/>
    </location>
    <ligand>
        <name>ATP</name>
        <dbReference type="ChEBI" id="CHEBI:30616"/>
    </ligand>
</feature>
<feature type="binding site" evidence="2">
    <location>
        <begin position="109"/>
        <end position="113"/>
    </location>
    <ligand>
        <name>ATP</name>
        <dbReference type="ChEBI" id="CHEBI:30616"/>
    </ligand>
</feature>
<feature type="binding site" evidence="2">
    <location>
        <position position="126"/>
    </location>
    <ligand>
        <name>ATP</name>
        <dbReference type="ChEBI" id="CHEBI:30616"/>
    </ligand>
</feature>
<feature type="binding site" evidence="2">
    <location>
        <begin position="170"/>
        <end position="171"/>
    </location>
    <ligand>
        <name>ATP</name>
        <dbReference type="ChEBI" id="CHEBI:30616"/>
    </ligand>
</feature>
<feature type="binding site" evidence="2">
    <location>
        <position position="212"/>
    </location>
    <ligand>
        <name>Zn(2+)</name>
        <dbReference type="ChEBI" id="CHEBI:29105"/>
    </ligand>
</feature>
<feature type="binding site" evidence="2">
    <location>
        <position position="215"/>
    </location>
    <ligand>
        <name>Zn(2+)</name>
        <dbReference type="ChEBI" id="CHEBI:29105"/>
    </ligand>
</feature>
<feature type="binding site" evidence="2">
    <location>
        <position position="290"/>
    </location>
    <ligand>
        <name>Zn(2+)</name>
        <dbReference type="ChEBI" id="CHEBI:29105"/>
    </ligand>
</feature>
<feature type="binding site" evidence="2">
    <location>
        <position position="293"/>
    </location>
    <ligand>
        <name>Zn(2+)</name>
        <dbReference type="ChEBI" id="CHEBI:29105"/>
    </ligand>
</feature>
<sequence>MTGESLDGSLHALTIELDALRRENANLKQQLKEKDGACGELPMSLEEFQRYGRQMIVGETGGLSGQVKLRSARVLIVGAGGLGCPALQYLAGAGIGHLGIVDNDVVEESNLHRQPLHDTSKVGLLKCDSAKEALSRLNPYCSIKTYPVRLSYANAFEIFPSWDLILDCTDSPMSRYLISDVAVNLGKTVVSGSGLGTEGQLSIYNFENKGPCYRCFYPIPPRPGSVVSCQSGGVLGPCIGVLGIMMAVEALKILFGIYTLENFKPFLMQYSGFPYQTLRMFKMRNRKQGCLCCGDNPTITKSTIESGHIKYEAFCGAINYDVLSKDERLSASEFEANYWSQKERGFVCLDVRPRLHYEISHLPGTYNMTVKELDEMEGSIEELQKHIPVITPDLDIVVLCRYGNDSRLATRILKDKFKLRNVRDVKGGYFAYIDEINPSLPKY</sequence>
<accession>Q756K6</accession>
<organism>
    <name type="scientific">Eremothecium gossypii (strain ATCC 10895 / CBS 109.51 / FGSC 9923 / NRRL Y-1056)</name>
    <name type="common">Yeast</name>
    <name type="synonym">Ashbya gossypii</name>
    <dbReference type="NCBI Taxonomy" id="284811"/>
    <lineage>
        <taxon>Eukaryota</taxon>
        <taxon>Fungi</taxon>
        <taxon>Dikarya</taxon>
        <taxon>Ascomycota</taxon>
        <taxon>Saccharomycotina</taxon>
        <taxon>Saccharomycetes</taxon>
        <taxon>Saccharomycetales</taxon>
        <taxon>Saccharomycetaceae</taxon>
        <taxon>Eremothecium</taxon>
    </lineage>
</organism>
<protein>
    <recommendedName>
        <fullName evidence="2">Adenylyltransferase and sulfurtransferase UBA4</fullName>
    </recommendedName>
    <alternativeName>
        <fullName evidence="2">Ubiquitin-like protein activator 4</fullName>
    </alternativeName>
    <domain>
        <recommendedName>
            <fullName evidence="2">Adenylyltransferase UBA4</fullName>
            <ecNumber evidence="2">2.7.7.-</ecNumber>
        </recommendedName>
    </domain>
    <domain>
        <recommendedName>
            <fullName evidence="2">Sulfurtransferase UBA4</fullName>
            <ecNumber evidence="2">2.8.1.-</ecNumber>
        </recommendedName>
    </domain>
</protein>
<dbReference type="EC" id="2.7.7.-" evidence="2"/>
<dbReference type="EC" id="2.8.1.-" evidence="2"/>
<dbReference type="EMBL" id="AE016818">
    <property type="protein sequence ID" value="AAS52929.1"/>
    <property type="molecule type" value="Genomic_DNA"/>
</dbReference>
<dbReference type="RefSeq" id="NP_985105.1">
    <property type="nucleotide sequence ID" value="NM_210459.1"/>
</dbReference>
<dbReference type="SMR" id="Q756K6"/>
<dbReference type="FunCoup" id="Q756K6">
    <property type="interactions" value="895"/>
</dbReference>
<dbReference type="STRING" id="284811.Q756K6"/>
<dbReference type="EnsemblFungi" id="AAS52929">
    <property type="protein sequence ID" value="AAS52929"/>
    <property type="gene ID" value="AGOS_AER248W"/>
</dbReference>
<dbReference type="GeneID" id="4621315"/>
<dbReference type="KEGG" id="ago:AGOS_AER248W"/>
<dbReference type="eggNOG" id="KOG2017">
    <property type="taxonomic scope" value="Eukaryota"/>
</dbReference>
<dbReference type="HOGENOM" id="CLU_013325_1_2_1"/>
<dbReference type="InParanoid" id="Q756K6"/>
<dbReference type="OMA" id="IPDVGMD"/>
<dbReference type="OrthoDB" id="10261062at2759"/>
<dbReference type="UniPathway" id="UPA00988"/>
<dbReference type="Proteomes" id="UP000000591">
    <property type="component" value="Chromosome V"/>
</dbReference>
<dbReference type="GO" id="GO:0005737">
    <property type="term" value="C:cytoplasm"/>
    <property type="evidence" value="ECO:0000318"/>
    <property type="project" value="GO_Central"/>
</dbReference>
<dbReference type="GO" id="GO:0005829">
    <property type="term" value="C:cytosol"/>
    <property type="evidence" value="ECO:0007669"/>
    <property type="project" value="InterPro"/>
</dbReference>
<dbReference type="GO" id="GO:0070733">
    <property type="term" value="F:AMPylase activity"/>
    <property type="evidence" value="ECO:0007669"/>
    <property type="project" value="EnsemblFungi"/>
</dbReference>
<dbReference type="GO" id="GO:0005524">
    <property type="term" value="F:ATP binding"/>
    <property type="evidence" value="ECO:0007669"/>
    <property type="project" value="UniProtKB-KW"/>
</dbReference>
<dbReference type="GO" id="GO:0042802">
    <property type="term" value="F:identical protein binding"/>
    <property type="evidence" value="ECO:0007669"/>
    <property type="project" value="EnsemblFungi"/>
</dbReference>
<dbReference type="GO" id="GO:0046872">
    <property type="term" value="F:metal ion binding"/>
    <property type="evidence" value="ECO:0007669"/>
    <property type="project" value="UniProtKB-KW"/>
</dbReference>
<dbReference type="GO" id="GO:0016779">
    <property type="term" value="F:nucleotidyltransferase activity"/>
    <property type="evidence" value="ECO:0000318"/>
    <property type="project" value="GO_Central"/>
</dbReference>
<dbReference type="GO" id="GO:0004792">
    <property type="term" value="F:thiosulfate-cyanide sulfurtransferase activity"/>
    <property type="evidence" value="ECO:0000318"/>
    <property type="project" value="GO_Central"/>
</dbReference>
<dbReference type="GO" id="GO:0042292">
    <property type="term" value="F:URM1 activating enzyme activity"/>
    <property type="evidence" value="ECO:0000318"/>
    <property type="project" value="GO_Central"/>
</dbReference>
<dbReference type="GO" id="GO:0007114">
    <property type="term" value="P:cell budding"/>
    <property type="evidence" value="ECO:0007669"/>
    <property type="project" value="EnsemblFungi"/>
</dbReference>
<dbReference type="GO" id="GO:0034599">
    <property type="term" value="P:cellular response to oxidative stress"/>
    <property type="evidence" value="ECO:0007669"/>
    <property type="project" value="EnsemblFungi"/>
</dbReference>
<dbReference type="GO" id="GO:0001403">
    <property type="term" value="P:invasive growth in response to glucose limitation"/>
    <property type="evidence" value="ECO:0007669"/>
    <property type="project" value="EnsemblFungi"/>
</dbReference>
<dbReference type="GO" id="GO:0032447">
    <property type="term" value="P:protein urmylation"/>
    <property type="evidence" value="ECO:0000318"/>
    <property type="project" value="GO_Central"/>
</dbReference>
<dbReference type="GO" id="GO:2000220">
    <property type="term" value="P:regulation of pseudohyphal growth"/>
    <property type="evidence" value="ECO:0007669"/>
    <property type="project" value="EnsemblFungi"/>
</dbReference>
<dbReference type="GO" id="GO:0002143">
    <property type="term" value="P:tRNA wobble position uridine thiolation"/>
    <property type="evidence" value="ECO:0000318"/>
    <property type="project" value="GO_Central"/>
</dbReference>
<dbReference type="CDD" id="cd00757">
    <property type="entry name" value="ThiF_MoeB_HesA_family"/>
    <property type="match status" value="1"/>
</dbReference>
<dbReference type="FunFam" id="3.40.250.10:FF:000014">
    <property type="entry name" value="Adenylyltransferase and sulfurtransferase MOCS3"/>
    <property type="match status" value="1"/>
</dbReference>
<dbReference type="FunFam" id="3.40.50.720:FF:000033">
    <property type="entry name" value="Adenylyltransferase and sulfurtransferase MOCS3"/>
    <property type="match status" value="1"/>
</dbReference>
<dbReference type="Gene3D" id="3.40.50.720">
    <property type="entry name" value="NAD(P)-binding Rossmann-like Domain"/>
    <property type="match status" value="1"/>
</dbReference>
<dbReference type="Gene3D" id="3.40.250.10">
    <property type="entry name" value="Rhodanese-like domain"/>
    <property type="match status" value="1"/>
</dbReference>
<dbReference type="HAMAP" id="MF_03049">
    <property type="entry name" value="MOCS3_Uba4"/>
    <property type="match status" value="1"/>
</dbReference>
<dbReference type="InterPro" id="IPR028885">
    <property type="entry name" value="MOCS3/Uba4"/>
</dbReference>
<dbReference type="InterPro" id="IPR001763">
    <property type="entry name" value="Rhodanese-like_dom"/>
</dbReference>
<dbReference type="InterPro" id="IPR036873">
    <property type="entry name" value="Rhodanese-like_dom_sf"/>
</dbReference>
<dbReference type="InterPro" id="IPR045886">
    <property type="entry name" value="ThiF/MoeB/HesA"/>
</dbReference>
<dbReference type="InterPro" id="IPR000594">
    <property type="entry name" value="ThiF_NAD_FAD-bd"/>
</dbReference>
<dbReference type="InterPro" id="IPR035985">
    <property type="entry name" value="Ubiquitin-activating_enz"/>
</dbReference>
<dbReference type="PANTHER" id="PTHR10953:SF102">
    <property type="entry name" value="ADENYLYLTRANSFERASE AND SULFURTRANSFERASE MOCS3"/>
    <property type="match status" value="1"/>
</dbReference>
<dbReference type="PANTHER" id="PTHR10953">
    <property type="entry name" value="UBIQUITIN-ACTIVATING ENZYME E1"/>
    <property type="match status" value="1"/>
</dbReference>
<dbReference type="Pfam" id="PF00581">
    <property type="entry name" value="Rhodanese"/>
    <property type="match status" value="1"/>
</dbReference>
<dbReference type="Pfam" id="PF00899">
    <property type="entry name" value="ThiF"/>
    <property type="match status" value="1"/>
</dbReference>
<dbReference type="SMART" id="SM00450">
    <property type="entry name" value="RHOD"/>
    <property type="match status" value="1"/>
</dbReference>
<dbReference type="SUPFAM" id="SSF69572">
    <property type="entry name" value="Activating enzymes of the ubiquitin-like proteins"/>
    <property type="match status" value="1"/>
</dbReference>
<dbReference type="PROSITE" id="PS50206">
    <property type="entry name" value="RHODANESE_3"/>
    <property type="match status" value="1"/>
</dbReference>
<reference key="1">
    <citation type="journal article" date="2004" name="Science">
        <title>The Ashbya gossypii genome as a tool for mapping the ancient Saccharomyces cerevisiae genome.</title>
        <authorList>
            <person name="Dietrich F.S."/>
            <person name="Voegeli S."/>
            <person name="Brachat S."/>
            <person name="Lerch A."/>
            <person name="Gates K."/>
            <person name="Steiner S."/>
            <person name="Mohr C."/>
            <person name="Poehlmann R."/>
            <person name="Luedi P."/>
            <person name="Choi S."/>
            <person name="Wing R.A."/>
            <person name="Flavier A."/>
            <person name="Gaffney T.D."/>
            <person name="Philippsen P."/>
        </authorList>
    </citation>
    <scope>NUCLEOTIDE SEQUENCE [LARGE SCALE GENOMIC DNA]</scope>
    <source>
        <strain>ATCC 10895 / CBS 109.51 / FGSC 9923 / NRRL Y-1056</strain>
    </source>
</reference>
<reference key="2">
    <citation type="journal article" date="2013" name="G3 (Bethesda)">
        <title>Genomes of Ashbya fungi isolated from insects reveal four mating-type loci, numerous translocations, lack of transposons, and distinct gene duplications.</title>
        <authorList>
            <person name="Dietrich F.S."/>
            <person name="Voegeli S."/>
            <person name="Kuo S."/>
            <person name="Philippsen P."/>
        </authorList>
    </citation>
    <scope>GENOME REANNOTATION</scope>
    <source>
        <strain>ATCC 10895 / CBS 109.51 / FGSC 9923 / NRRL Y-1056</strain>
    </source>
</reference>
<gene>
    <name evidence="2" type="primary">UBA4</name>
    <name type="ordered locus">AER248W</name>
</gene>
<comment type="function">
    <text evidence="2">Plays a central role in 2-thiolation of mcm(5)S(2)U at tRNA wobble positions of cytosolic tRNA(Lys), tRNA(Glu) and tRNA(Gln). Acts by mediating the C-terminal thiocarboxylation of sulfur carrier URM1. Its N-terminus first activates URM1 as acyl-adenylate (-COAMP), then the persulfide sulfur on the catalytic cysteine is transferred to URM1 to form thiocarboxylation (-COSH) of its C-terminus. The reaction probably involves hydrogen sulfide that is generated from the persulfide intermediate and that acts as a nucleophile towards URM1. Subsequently, a transient disulfide bond is formed. Does not use thiosulfate as sulfur donor; NFS1 probably acting as a sulfur donor for thiocarboxylation reactions. Prior mcm(5) tRNA modification by the elongator complex is required for 2-thiolation. May also be involved in protein urmylation.</text>
</comment>
<comment type="cofactor">
    <cofactor evidence="2">
        <name>Zn(2+)</name>
        <dbReference type="ChEBI" id="CHEBI:29105"/>
    </cofactor>
    <text evidence="2">Binds 1 zinc ion per subunit.</text>
</comment>
<comment type="pathway">
    <text evidence="2">tRNA modification; 5-methoxycarbonylmethyl-2-thiouridine-tRNA biosynthesis.</text>
</comment>
<comment type="subcellular location">
    <subcellularLocation>
        <location evidence="1">Cytoplasm</location>
        <location evidence="1">Cytosol</location>
    </subcellularLocation>
</comment>
<comment type="similarity">
    <text evidence="2">In the N-terminal section; belongs to the HesA/MoeB/ThiF family. UBA4 subfamily.</text>
</comment>
<keyword id="KW-0067">ATP-binding</keyword>
<keyword id="KW-0963">Cytoplasm</keyword>
<keyword id="KW-0479">Metal-binding</keyword>
<keyword id="KW-0511">Multifunctional enzyme</keyword>
<keyword id="KW-0547">Nucleotide-binding</keyword>
<keyword id="KW-0548">Nucleotidyltransferase</keyword>
<keyword id="KW-1185">Reference proteome</keyword>
<keyword id="KW-0808">Transferase</keyword>
<keyword id="KW-0819">tRNA processing</keyword>
<keyword id="KW-0833">Ubl conjugation pathway</keyword>
<keyword id="KW-0862">Zinc</keyword>
<evidence type="ECO:0000250" key="1">
    <source>
        <dbReference type="UniProtKB" id="P38820"/>
    </source>
</evidence>
<evidence type="ECO:0000255" key="2">
    <source>
        <dbReference type="HAMAP-Rule" id="MF_03049"/>
    </source>
</evidence>